<evidence type="ECO:0000255" key="1">
    <source>
        <dbReference type="HAMAP-Rule" id="MF_00040"/>
    </source>
</evidence>
<dbReference type="EMBL" id="BX251411">
    <property type="protein sequence ID" value="CAD66994.1"/>
    <property type="molecule type" value="Genomic_DNA"/>
</dbReference>
<dbReference type="SMR" id="Q83HZ5"/>
<dbReference type="KEGG" id="tws:TW321"/>
<dbReference type="HOGENOM" id="CLU_073981_2_0_11"/>
<dbReference type="GO" id="GO:0005737">
    <property type="term" value="C:cytoplasm"/>
    <property type="evidence" value="ECO:0007669"/>
    <property type="project" value="UniProtKB-SubCell"/>
</dbReference>
<dbReference type="GO" id="GO:0043023">
    <property type="term" value="F:ribosomal large subunit binding"/>
    <property type="evidence" value="ECO:0007669"/>
    <property type="project" value="TreeGrafter"/>
</dbReference>
<dbReference type="GO" id="GO:0006415">
    <property type="term" value="P:translational termination"/>
    <property type="evidence" value="ECO:0007669"/>
    <property type="project" value="UniProtKB-UniRule"/>
</dbReference>
<dbReference type="Gene3D" id="3.30.1360.40">
    <property type="match status" value="1"/>
</dbReference>
<dbReference type="Gene3D" id="1.10.132.20">
    <property type="entry name" value="Ribosome-recycling factor"/>
    <property type="match status" value="1"/>
</dbReference>
<dbReference type="HAMAP" id="MF_00040">
    <property type="entry name" value="RRF"/>
    <property type="match status" value="1"/>
</dbReference>
<dbReference type="InterPro" id="IPR002661">
    <property type="entry name" value="Ribosome_recyc_fac"/>
</dbReference>
<dbReference type="InterPro" id="IPR023584">
    <property type="entry name" value="Ribosome_recyc_fac_dom"/>
</dbReference>
<dbReference type="InterPro" id="IPR036191">
    <property type="entry name" value="RRF_sf"/>
</dbReference>
<dbReference type="PANTHER" id="PTHR20982:SF3">
    <property type="entry name" value="MITOCHONDRIAL RIBOSOME RECYCLING FACTOR PSEUDO 1"/>
    <property type="match status" value="1"/>
</dbReference>
<dbReference type="PANTHER" id="PTHR20982">
    <property type="entry name" value="RIBOSOME RECYCLING FACTOR"/>
    <property type="match status" value="1"/>
</dbReference>
<dbReference type="Pfam" id="PF01765">
    <property type="entry name" value="RRF"/>
    <property type="match status" value="1"/>
</dbReference>
<dbReference type="SUPFAM" id="SSF55194">
    <property type="entry name" value="Ribosome recycling factor, RRF"/>
    <property type="match status" value="1"/>
</dbReference>
<gene>
    <name evidence="1" type="primary">frr</name>
    <name type="ordered locus">TW321</name>
</gene>
<reference key="1">
    <citation type="journal article" date="2003" name="Lancet">
        <title>Sequencing and analysis of the genome of the Whipple's disease bacterium Tropheryma whipplei.</title>
        <authorList>
            <person name="Bentley S.D."/>
            <person name="Maiwald M."/>
            <person name="Murphy L.D."/>
            <person name="Pallen M.J."/>
            <person name="Yeats C.A."/>
            <person name="Dover L.G."/>
            <person name="Norbertczak H.T."/>
            <person name="Besra G.S."/>
            <person name="Quail M.A."/>
            <person name="Harris D.E."/>
            <person name="von Herbay A."/>
            <person name="Goble A."/>
            <person name="Rutter S."/>
            <person name="Squares R."/>
            <person name="Squares S."/>
            <person name="Barrell B.G."/>
            <person name="Parkhill J."/>
            <person name="Relman D.A."/>
        </authorList>
    </citation>
    <scope>NUCLEOTIDE SEQUENCE [LARGE SCALE GENOMIC DNA]</scope>
    <source>
        <strain>TW08/27</strain>
    </source>
</reference>
<organism>
    <name type="scientific">Tropheryma whipplei (strain TW08/27)</name>
    <name type="common">Whipple's bacillus</name>
    <dbReference type="NCBI Taxonomy" id="218496"/>
    <lineage>
        <taxon>Bacteria</taxon>
        <taxon>Bacillati</taxon>
        <taxon>Actinomycetota</taxon>
        <taxon>Actinomycetes</taxon>
        <taxon>Micrococcales</taxon>
        <taxon>Tropherymataceae</taxon>
        <taxon>Tropheryma</taxon>
    </lineage>
</organism>
<comment type="function">
    <text evidence="1">Responsible for the release of ribosomes from messenger RNA at the termination of protein biosynthesis. May increase the efficiency of translation by recycling ribosomes from one round of translation to another.</text>
</comment>
<comment type="subcellular location">
    <subcellularLocation>
        <location evidence="1">Cytoplasm</location>
    </subcellularLocation>
</comment>
<comment type="similarity">
    <text evidence="1">Belongs to the RRF family.</text>
</comment>
<name>RRF_TROW8</name>
<keyword id="KW-0963">Cytoplasm</keyword>
<keyword id="KW-0648">Protein biosynthesis</keyword>
<protein>
    <recommendedName>
        <fullName evidence="1">Ribosome-recycling factor</fullName>
        <shortName evidence="1">RRF</shortName>
    </recommendedName>
    <alternativeName>
        <fullName evidence="1">Ribosome-releasing factor</fullName>
    </alternativeName>
</protein>
<accession>Q83HZ5</accession>
<feature type="chain" id="PRO_0000167571" description="Ribosome-recycling factor">
    <location>
        <begin position="1"/>
        <end position="181"/>
    </location>
</feature>
<sequence>MGIMCSGDVSERMNKTIELLKEQFLSIHSGRVNSGQFEKVMVDCEGASVPLVSLASIRVLNANTIVVTPYDSALLSQIDRALRNVPNIGTPGNDGECIKIVMPQLTEARRHEYVKQARVKAEEARVSARNIRRKARASLDAMGLAKDEIVRREKELDKLTKDVISVVDDLLRHKESELLRL</sequence>
<proteinExistence type="inferred from homology"/>